<geneLocation type="chloroplast"/>
<protein>
    <recommendedName>
        <fullName evidence="1">Small ribosomal subunit protein uS11c</fullName>
    </recommendedName>
    <alternativeName>
        <fullName evidence="2">30S ribosomal protein S11, chloroplastic</fullName>
    </alternativeName>
</protein>
<sequence>MIKQIKRKKVKKNVVVGVVHIQASFNNTIVTITDLGGNTLSTGSAGAVGFKGARKGTPFAAQLASEKAAEKATEYGLKKVEVLVKGQGSGRETAVRAIQNSDIEITAITDITSIPFNGCRPPKRRRV</sequence>
<dbReference type="EMBL" id="EU168191">
    <property type="protein sequence ID" value="ABV70174.1"/>
    <property type="molecule type" value="Genomic_DNA"/>
</dbReference>
<dbReference type="RefSeq" id="YP_001936427.1">
    <property type="nucleotide sequence ID" value="NC_010772.1"/>
</dbReference>
<dbReference type="SMR" id="B2XTU1"/>
<dbReference type="GeneID" id="6335651"/>
<dbReference type="GO" id="GO:0009507">
    <property type="term" value="C:chloroplast"/>
    <property type="evidence" value="ECO:0007669"/>
    <property type="project" value="UniProtKB-SubCell"/>
</dbReference>
<dbReference type="GO" id="GO:1990904">
    <property type="term" value="C:ribonucleoprotein complex"/>
    <property type="evidence" value="ECO:0007669"/>
    <property type="project" value="UniProtKB-KW"/>
</dbReference>
<dbReference type="GO" id="GO:0005840">
    <property type="term" value="C:ribosome"/>
    <property type="evidence" value="ECO:0007669"/>
    <property type="project" value="UniProtKB-KW"/>
</dbReference>
<dbReference type="GO" id="GO:0019843">
    <property type="term" value="F:rRNA binding"/>
    <property type="evidence" value="ECO:0007669"/>
    <property type="project" value="UniProtKB-UniRule"/>
</dbReference>
<dbReference type="GO" id="GO:0003735">
    <property type="term" value="F:structural constituent of ribosome"/>
    <property type="evidence" value="ECO:0007669"/>
    <property type="project" value="InterPro"/>
</dbReference>
<dbReference type="GO" id="GO:0006412">
    <property type="term" value="P:translation"/>
    <property type="evidence" value="ECO:0007669"/>
    <property type="project" value="UniProtKB-UniRule"/>
</dbReference>
<dbReference type="FunFam" id="3.30.420.80:FF:000010">
    <property type="entry name" value="30S ribosomal protein S11"/>
    <property type="match status" value="1"/>
</dbReference>
<dbReference type="Gene3D" id="3.30.420.80">
    <property type="entry name" value="Ribosomal protein S11"/>
    <property type="match status" value="1"/>
</dbReference>
<dbReference type="HAMAP" id="MF_01310">
    <property type="entry name" value="Ribosomal_uS11"/>
    <property type="match status" value="1"/>
</dbReference>
<dbReference type="InterPro" id="IPR001971">
    <property type="entry name" value="Ribosomal_uS11"/>
</dbReference>
<dbReference type="InterPro" id="IPR019981">
    <property type="entry name" value="Ribosomal_uS11_bac-type"/>
</dbReference>
<dbReference type="InterPro" id="IPR036967">
    <property type="entry name" value="Ribosomal_uS11_sf"/>
</dbReference>
<dbReference type="NCBIfam" id="NF003698">
    <property type="entry name" value="PRK05309.1"/>
    <property type="match status" value="1"/>
</dbReference>
<dbReference type="NCBIfam" id="TIGR03632">
    <property type="entry name" value="uS11_bact"/>
    <property type="match status" value="1"/>
</dbReference>
<dbReference type="PANTHER" id="PTHR11759">
    <property type="entry name" value="40S RIBOSOMAL PROTEIN S14/30S RIBOSOMAL PROTEIN S11"/>
    <property type="match status" value="1"/>
</dbReference>
<dbReference type="Pfam" id="PF00411">
    <property type="entry name" value="Ribosomal_S11"/>
    <property type="match status" value="1"/>
</dbReference>
<dbReference type="PIRSF" id="PIRSF002131">
    <property type="entry name" value="Ribosomal_S11"/>
    <property type="match status" value="1"/>
</dbReference>
<dbReference type="SUPFAM" id="SSF53137">
    <property type="entry name" value="Translational machinery components"/>
    <property type="match status" value="1"/>
</dbReference>
<proteinExistence type="inferred from homology"/>
<accession>B2XTU1</accession>
<reference key="1">
    <citation type="journal article" date="2008" name="BMC Genomics">
        <title>Chloroplast genome sequencing analysis of Heterosigma akashiwo CCMP452 (West Atlantic) and NIES293 (West Pacific) strains.</title>
        <authorList>
            <person name="Cattolico R.A."/>
            <person name="Jacobs M.A."/>
            <person name="Zhou Y."/>
            <person name="Chang J."/>
            <person name="Duplessis M."/>
            <person name="Lybrand T."/>
            <person name="McKay J."/>
            <person name="Ong H.C."/>
            <person name="Sims E."/>
            <person name="Rocap G."/>
        </authorList>
    </citation>
    <scope>NUCLEOTIDE SEQUENCE [LARGE SCALE GENOMIC DNA]</scope>
</reference>
<evidence type="ECO:0000255" key="1">
    <source>
        <dbReference type="HAMAP-Rule" id="MF_01310"/>
    </source>
</evidence>
<evidence type="ECO:0000305" key="2"/>
<comment type="subunit">
    <text evidence="1">Part of the 30S ribosomal subunit.</text>
</comment>
<comment type="subcellular location">
    <subcellularLocation>
        <location>Plastid</location>
        <location>Chloroplast</location>
    </subcellularLocation>
</comment>
<comment type="similarity">
    <text evidence="1">Belongs to the universal ribosomal protein uS11 family.</text>
</comment>
<keyword id="KW-0150">Chloroplast</keyword>
<keyword id="KW-0934">Plastid</keyword>
<keyword id="KW-0687">Ribonucleoprotein</keyword>
<keyword id="KW-0689">Ribosomal protein</keyword>
<keyword id="KW-0694">RNA-binding</keyword>
<keyword id="KW-0699">rRNA-binding</keyword>
<feature type="chain" id="PRO_0000364223" description="Small ribosomal subunit protein uS11c">
    <location>
        <begin position="1"/>
        <end position="127"/>
    </location>
</feature>
<organism>
    <name type="scientific">Heterosigma akashiwo (strain CCMP452 / OLISTH)</name>
    <dbReference type="NCBI Taxonomy" id="536046"/>
    <lineage>
        <taxon>Eukaryota</taxon>
        <taxon>Sar</taxon>
        <taxon>Stramenopiles</taxon>
        <taxon>Ochrophyta</taxon>
        <taxon>Raphidophyceae</taxon>
        <taxon>Chattonellales</taxon>
        <taxon>Chattonellaceae</taxon>
        <taxon>Heterosigma</taxon>
    </lineage>
</organism>
<name>RR11_HETA4</name>
<gene>
    <name evidence="1" type="primary">rps11</name>
    <name type="ordered locus">Heak452_Cp126</name>
</gene>